<geneLocation type="chloroplast"/>
<accession>Q1KVX5</accession>
<keyword id="KW-0150">Chloroplast</keyword>
<keyword id="KW-0240">DNA-directed RNA polymerase</keyword>
<keyword id="KW-0548">Nucleotidyltransferase</keyword>
<keyword id="KW-0934">Plastid</keyword>
<keyword id="KW-0804">Transcription</keyword>
<keyword id="KW-0808">Transferase</keyword>
<comment type="function">
    <text evidence="1">DNA-dependent RNA polymerase catalyzes the transcription of DNA into RNA using the four ribonucleoside triphosphates as substrates.</text>
</comment>
<comment type="catalytic activity">
    <reaction>
        <text>RNA(n) + a ribonucleoside 5'-triphosphate = RNA(n+1) + diphosphate</text>
        <dbReference type="Rhea" id="RHEA:21248"/>
        <dbReference type="Rhea" id="RHEA-COMP:14527"/>
        <dbReference type="Rhea" id="RHEA-COMP:17342"/>
        <dbReference type="ChEBI" id="CHEBI:33019"/>
        <dbReference type="ChEBI" id="CHEBI:61557"/>
        <dbReference type="ChEBI" id="CHEBI:140395"/>
        <dbReference type="EC" id="2.7.7.6"/>
    </reaction>
</comment>
<comment type="subunit">
    <text evidence="1">In plastids the minimal PEP RNA polymerase catalytic core is composed of four subunits: alpha, beta, beta', and beta''. When a (nuclear-encoded) sigma factor is associated with the core the holoenzyme is formed, which can initiate transcription (By similarity).</text>
</comment>
<comment type="subcellular location">
    <subcellularLocation>
        <location>Plastid</location>
        <location>Chloroplast</location>
    </subcellularLocation>
</comment>
<comment type="miscellaneous">
    <text>In S.obliquus the gene for this protein is split in two.</text>
</comment>
<comment type="similarity">
    <text evidence="2">Belongs to the RNA polymerase beta chain family.</text>
</comment>
<dbReference type="EC" id="2.7.7.6"/>
<dbReference type="EMBL" id="DQ396875">
    <property type="protein sequence ID" value="ABD48231.1"/>
    <property type="molecule type" value="Genomic_DNA"/>
</dbReference>
<dbReference type="RefSeq" id="YP_635949.1">
    <property type="nucleotide sequence ID" value="NC_008101.1"/>
</dbReference>
<dbReference type="SMR" id="Q1KVX5"/>
<dbReference type="GeneID" id="4099816"/>
<dbReference type="GO" id="GO:0009507">
    <property type="term" value="C:chloroplast"/>
    <property type="evidence" value="ECO:0007669"/>
    <property type="project" value="UniProtKB-SubCell"/>
</dbReference>
<dbReference type="GO" id="GO:0000428">
    <property type="term" value="C:DNA-directed RNA polymerase complex"/>
    <property type="evidence" value="ECO:0007669"/>
    <property type="project" value="UniProtKB-KW"/>
</dbReference>
<dbReference type="GO" id="GO:0005739">
    <property type="term" value="C:mitochondrion"/>
    <property type="evidence" value="ECO:0007669"/>
    <property type="project" value="GOC"/>
</dbReference>
<dbReference type="GO" id="GO:0003677">
    <property type="term" value="F:DNA binding"/>
    <property type="evidence" value="ECO:0007669"/>
    <property type="project" value="InterPro"/>
</dbReference>
<dbReference type="GO" id="GO:0003899">
    <property type="term" value="F:DNA-directed RNA polymerase activity"/>
    <property type="evidence" value="ECO:0007669"/>
    <property type="project" value="UniProtKB-EC"/>
</dbReference>
<dbReference type="GO" id="GO:0032549">
    <property type="term" value="F:ribonucleoside binding"/>
    <property type="evidence" value="ECO:0007669"/>
    <property type="project" value="InterPro"/>
</dbReference>
<dbReference type="GO" id="GO:0006351">
    <property type="term" value="P:DNA-templated transcription"/>
    <property type="evidence" value="ECO:0007669"/>
    <property type="project" value="InterPro"/>
</dbReference>
<dbReference type="CDD" id="cd00653">
    <property type="entry name" value="RNA_pol_B_RPB2"/>
    <property type="match status" value="1"/>
</dbReference>
<dbReference type="Gene3D" id="2.40.50.100">
    <property type="match status" value="1"/>
</dbReference>
<dbReference type="Gene3D" id="2.40.50.150">
    <property type="match status" value="1"/>
</dbReference>
<dbReference type="Gene3D" id="2.40.270.10">
    <property type="entry name" value="DNA-directed RNA polymerase, subunit 2, domain 6"/>
    <property type="match status" value="1"/>
</dbReference>
<dbReference type="Gene3D" id="3.90.1800.10">
    <property type="entry name" value="RNA polymerase alpha subunit dimerisation domain"/>
    <property type="match status" value="1"/>
</dbReference>
<dbReference type="InterPro" id="IPR015712">
    <property type="entry name" value="DNA-dir_RNA_pol_su2"/>
</dbReference>
<dbReference type="InterPro" id="IPR007120">
    <property type="entry name" value="DNA-dir_RNAP_su2_dom"/>
</dbReference>
<dbReference type="InterPro" id="IPR037033">
    <property type="entry name" value="DNA-dir_RNAP_su2_hyb_sf"/>
</dbReference>
<dbReference type="InterPro" id="IPR007121">
    <property type="entry name" value="RNA_pol_bsu_CS"/>
</dbReference>
<dbReference type="InterPro" id="IPR007641">
    <property type="entry name" value="RNA_pol_Rpb2_7"/>
</dbReference>
<dbReference type="InterPro" id="IPR014724">
    <property type="entry name" value="RNA_pol_RPB2_OB-fold"/>
</dbReference>
<dbReference type="PANTHER" id="PTHR20856">
    <property type="entry name" value="DNA-DIRECTED RNA POLYMERASE I SUBUNIT 2"/>
    <property type="match status" value="1"/>
</dbReference>
<dbReference type="Pfam" id="PF00562">
    <property type="entry name" value="RNA_pol_Rpb2_6"/>
    <property type="match status" value="1"/>
</dbReference>
<dbReference type="Pfam" id="PF04560">
    <property type="entry name" value="RNA_pol_Rpb2_7"/>
    <property type="match status" value="1"/>
</dbReference>
<dbReference type="SUPFAM" id="SSF64484">
    <property type="entry name" value="beta and beta-prime subunits of DNA dependent RNA-polymerase"/>
    <property type="match status" value="1"/>
</dbReference>
<dbReference type="PROSITE" id="PS01166">
    <property type="entry name" value="RNA_POL_BETA"/>
    <property type="match status" value="1"/>
</dbReference>
<reference key="1">
    <citation type="journal article" date="2006" name="BMC Evol. Biol.">
        <title>The complete chloroplast genome sequence of the chlorophycean green alga Scenedesmus obliquus reveals a compact gene organization and a biased distribution of genes on the two DNA strands.</title>
        <authorList>
            <person name="de Cambiaire J.-C."/>
            <person name="Otis C."/>
            <person name="Lemieux C."/>
            <person name="Turmel M."/>
        </authorList>
    </citation>
    <scope>NUCLEOTIDE SEQUENCE [LARGE SCALE GENOMIC DNA]</scope>
    <source>
        <strain>UTEX 393</strain>
    </source>
</reference>
<feature type="chain" id="PRO_0000308260" description="DNA-directed RNA polymerase subunit beta C-terminal section">
    <location>
        <begin position="1"/>
        <end position="565"/>
    </location>
</feature>
<evidence type="ECO:0000250" key="1"/>
<evidence type="ECO:0000305" key="2"/>
<gene>
    <name type="primary">rpoB2</name>
    <name type="synonym">rpoBb</name>
</gene>
<proteinExistence type="inferred from homology"/>
<organism>
    <name type="scientific">Tetradesmus obliquus</name>
    <name type="common">Green alga</name>
    <name type="synonym">Acutodesmus obliquus</name>
    <dbReference type="NCBI Taxonomy" id="3088"/>
    <lineage>
        <taxon>Eukaryota</taxon>
        <taxon>Viridiplantae</taxon>
        <taxon>Chlorophyta</taxon>
        <taxon>core chlorophytes</taxon>
        <taxon>Chlorophyceae</taxon>
        <taxon>CS clade</taxon>
        <taxon>Sphaeropleales</taxon>
        <taxon>Scenedesmaceae</taxon>
        <taxon>Tetradesmus</taxon>
    </lineage>
</organism>
<protein>
    <recommendedName>
        <fullName>DNA-directed RNA polymerase subunit beta C-terminal section</fullName>
        <ecNumber>2.7.7.6</ecNumber>
    </recommendedName>
    <alternativeName>
        <fullName>PEP</fullName>
    </alternativeName>
    <alternativeName>
        <fullName>Plastid-encoded RNA polymerase subunit beta C-terminal section</fullName>
        <shortName>RNA polymerase subunit beta C-terminal section</shortName>
    </alternativeName>
</protein>
<sequence length="565" mass="64666">MKKKSFCLNFRANKKKKNFVLSKKNIFGKTQKFKICVPFFTYTENKINTHISPFDSFSCLFASQSIESLQNQKFSKYSLQKYQRSNQDTLIVQRPMVREGDWVQSGDLLADCASSLGGELCLGKNIFIAYMPWEGYNYEDAILISQRLVTEDVYTSVHIESYEVETKNTKLGKEQITNKIPDIPEKEKNHLDERGIVKLGTFVHEGQILVGKVTPIQKKYRSGYEKLLYTILEKELIPMRDSSLRTPKGLKAKVVEIKILNFSWNFAPTEKTLPSPIQQKKKNSKILLKKQRKPERVQVYLAEKRKIQVGDKMAGRHGNKGIVSKILPIQDMPFLPDGTPLDMVLNPLGVPSRMNVGQIYECLLGLASKYLNHYYRIQAFDEIYGPHASRSFTFAKLYEARLKTNQKWLFNPCYPGKMQIFDGQTGEPYDSPVTVGIAYMLKLVHLVDDKIHARSTGPYSLVTQQPLRGRSKYGGQRLGEMEVWAIEAYGAAFILLEMLTIKSDDISGRMTLWSNILLNMPIYIGTPESFKVLICELQALCLDMGLFQLNKKGFLTQIEHLMQLP</sequence>
<name>RPOB2_TETOB</name>